<keyword id="KW-0007">Acetylation</keyword>
<keyword id="KW-0025">Alternative splicing</keyword>
<keyword id="KW-0597">Phosphoprotein</keyword>
<keyword id="KW-1267">Proteomics identification</keyword>
<keyword id="KW-1185">Reference proteome</keyword>
<keyword id="KW-0677">Repeat</keyword>
<keyword id="KW-0833">Ubl conjugation pathway</keyword>
<keyword id="KW-0853">WD repeat</keyword>
<feature type="chain" id="PRO_0000050999" description="F-box/WD repeat-containing protein 9">
    <location>
        <begin position="1"/>
        <end position="458"/>
    </location>
</feature>
<feature type="domain" description="F-box" evidence="3">
    <location>
        <begin position="76"/>
        <end position="123"/>
    </location>
</feature>
<feature type="repeat" description="WD 1" evidence="2">
    <location>
        <begin position="171"/>
        <end position="210"/>
    </location>
</feature>
<feature type="repeat" description="WD 2" evidence="2">
    <location>
        <begin position="220"/>
        <end position="261"/>
    </location>
</feature>
<feature type="repeat" description="WD 3" evidence="2">
    <location>
        <begin position="264"/>
        <end position="301"/>
    </location>
</feature>
<feature type="repeat" description="WD 4" evidence="2">
    <location>
        <begin position="305"/>
        <end position="342"/>
    </location>
</feature>
<feature type="repeat" description="WD 5" evidence="2">
    <location>
        <begin position="344"/>
        <end position="381"/>
    </location>
</feature>
<feature type="repeat" description="WD 6" evidence="2">
    <location>
        <begin position="387"/>
        <end position="424"/>
    </location>
</feature>
<feature type="repeat" description="WD 7" evidence="2">
    <location>
        <begin position="427"/>
        <end position="458"/>
    </location>
</feature>
<feature type="region of interest" description="Disordered" evidence="4">
    <location>
        <begin position="1"/>
        <end position="30"/>
    </location>
</feature>
<feature type="region of interest" description="Disordered" evidence="4">
    <location>
        <begin position="42"/>
        <end position="64"/>
    </location>
</feature>
<feature type="compositionally biased region" description="Acidic residues" evidence="4">
    <location>
        <begin position="16"/>
        <end position="26"/>
    </location>
</feature>
<feature type="modified residue" description="N-acetylmethionine" evidence="7">
    <location>
        <position position="1"/>
    </location>
</feature>
<feature type="modified residue" description="Phosphoserine" evidence="6 8 9">
    <location>
        <position position="18"/>
    </location>
</feature>
<feature type="modified residue" description="Phosphothreonine" evidence="6 8">
    <location>
        <position position="55"/>
    </location>
</feature>
<feature type="modified residue" description="Phosphoserine" evidence="6 8">
    <location>
        <position position="59"/>
    </location>
</feature>
<feature type="splice variant" id="VSP_060706" description="In isoform 2." evidence="5">
    <location>
        <begin position="128"/>
        <end position="137"/>
    </location>
</feature>
<feature type="splice variant" id="VSP_060707" description="In isoform 2." evidence="5">
    <original>R</original>
    <variation>RDRMETRDALMGWGGPSRGSDIPPHRPITHE</variation>
    <location>
        <position position="294"/>
    </location>
</feature>
<feature type="sequence variant" id="VAR_057599" description="In dbSNP:rs6511833.">
    <original>R</original>
    <variation>K</variation>
    <location>
        <position position="70"/>
    </location>
</feature>
<feature type="sequence variant" id="VAR_062097" description="In dbSNP:rs10424623.">
    <original>T</original>
    <variation>A</variation>
    <location>
        <position position="219"/>
    </location>
</feature>
<gene>
    <name type="primary">FBXW9</name>
    <name type="synonym">FBW9</name>
</gene>
<name>FBXW9_HUMAN</name>
<reference key="1">
    <citation type="journal article" date="2004" name="Genes Dev.">
        <title>Systematic analysis and nomenclature of mammalian F-box proteins.</title>
        <authorList>
            <person name="Jin J."/>
            <person name="Cardozo T."/>
            <person name="Lovering R.C."/>
            <person name="Elledge S.J."/>
            <person name="Pagano M."/>
            <person name="Harper J.W."/>
        </authorList>
    </citation>
    <scope>NUCLEOTIDE SEQUENCE [MRNA] (ISOFORM 2)</scope>
</reference>
<reference key="2">
    <citation type="journal article" date="2004" name="Nat. Genet.">
        <title>Complete sequencing and characterization of 21,243 full-length human cDNAs.</title>
        <authorList>
            <person name="Ota T."/>
            <person name="Suzuki Y."/>
            <person name="Nishikawa T."/>
            <person name="Otsuki T."/>
            <person name="Sugiyama T."/>
            <person name="Irie R."/>
            <person name="Wakamatsu A."/>
            <person name="Hayashi K."/>
            <person name="Sato H."/>
            <person name="Nagai K."/>
            <person name="Kimura K."/>
            <person name="Makita H."/>
            <person name="Sekine M."/>
            <person name="Obayashi M."/>
            <person name="Nishi T."/>
            <person name="Shibahara T."/>
            <person name="Tanaka T."/>
            <person name="Ishii S."/>
            <person name="Yamamoto J."/>
            <person name="Saito K."/>
            <person name="Kawai Y."/>
            <person name="Isono Y."/>
            <person name="Nakamura Y."/>
            <person name="Nagahari K."/>
            <person name="Murakami K."/>
            <person name="Yasuda T."/>
            <person name="Iwayanagi T."/>
            <person name="Wagatsuma M."/>
            <person name="Shiratori A."/>
            <person name="Sudo H."/>
            <person name="Hosoiri T."/>
            <person name="Kaku Y."/>
            <person name="Kodaira H."/>
            <person name="Kondo H."/>
            <person name="Sugawara M."/>
            <person name="Takahashi M."/>
            <person name="Kanda K."/>
            <person name="Yokoi T."/>
            <person name="Furuya T."/>
            <person name="Kikkawa E."/>
            <person name="Omura Y."/>
            <person name="Abe K."/>
            <person name="Kamihara K."/>
            <person name="Katsuta N."/>
            <person name="Sato K."/>
            <person name="Tanikawa M."/>
            <person name="Yamazaki M."/>
            <person name="Ninomiya K."/>
            <person name="Ishibashi T."/>
            <person name="Yamashita H."/>
            <person name="Murakawa K."/>
            <person name="Fujimori K."/>
            <person name="Tanai H."/>
            <person name="Kimata M."/>
            <person name="Watanabe M."/>
            <person name="Hiraoka S."/>
            <person name="Chiba Y."/>
            <person name="Ishida S."/>
            <person name="Ono Y."/>
            <person name="Takiguchi S."/>
            <person name="Watanabe S."/>
            <person name="Yosida M."/>
            <person name="Hotuta T."/>
            <person name="Kusano J."/>
            <person name="Kanehori K."/>
            <person name="Takahashi-Fujii A."/>
            <person name="Hara H."/>
            <person name="Tanase T.-O."/>
            <person name="Nomura Y."/>
            <person name="Togiya S."/>
            <person name="Komai F."/>
            <person name="Hara R."/>
            <person name="Takeuchi K."/>
            <person name="Arita M."/>
            <person name="Imose N."/>
            <person name="Musashino K."/>
            <person name="Yuuki H."/>
            <person name="Oshima A."/>
            <person name="Sasaki N."/>
            <person name="Aotsuka S."/>
            <person name="Yoshikawa Y."/>
            <person name="Matsunawa H."/>
            <person name="Ichihara T."/>
            <person name="Shiohata N."/>
            <person name="Sano S."/>
            <person name="Moriya S."/>
            <person name="Momiyama H."/>
            <person name="Satoh N."/>
            <person name="Takami S."/>
            <person name="Terashima Y."/>
            <person name="Suzuki O."/>
            <person name="Nakagawa S."/>
            <person name="Senoh A."/>
            <person name="Mizoguchi H."/>
            <person name="Goto Y."/>
            <person name="Shimizu F."/>
            <person name="Wakebe H."/>
            <person name="Hishigaki H."/>
            <person name="Watanabe T."/>
            <person name="Sugiyama A."/>
            <person name="Takemoto M."/>
            <person name="Kawakami B."/>
            <person name="Yamazaki M."/>
            <person name="Watanabe K."/>
            <person name="Kumagai A."/>
            <person name="Itakura S."/>
            <person name="Fukuzumi Y."/>
            <person name="Fujimori Y."/>
            <person name="Komiyama M."/>
            <person name="Tashiro H."/>
            <person name="Tanigami A."/>
            <person name="Fujiwara T."/>
            <person name="Ono T."/>
            <person name="Yamada K."/>
            <person name="Fujii Y."/>
            <person name="Ozaki K."/>
            <person name="Hirao M."/>
            <person name="Ohmori Y."/>
            <person name="Kawabata A."/>
            <person name="Hikiji T."/>
            <person name="Kobatake N."/>
            <person name="Inagaki H."/>
            <person name="Ikema Y."/>
            <person name="Okamoto S."/>
            <person name="Okitani R."/>
            <person name="Kawakami T."/>
            <person name="Noguchi S."/>
            <person name="Itoh T."/>
            <person name="Shigeta K."/>
            <person name="Senba T."/>
            <person name="Matsumura K."/>
            <person name="Nakajima Y."/>
            <person name="Mizuno T."/>
            <person name="Morinaga M."/>
            <person name="Sasaki M."/>
            <person name="Togashi T."/>
            <person name="Oyama M."/>
            <person name="Hata H."/>
            <person name="Watanabe M."/>
            <person name="Komatsu T."/>
            <person name="Mizushima-Sugano J."/>
            <person name="Satoh T."/>
            <person name="Shirai Y."/>
            <person name="Takahashi Y."/>
            <person name="Nakagawa K."/>
            <person name="Okumura K."/>
            <person name="Nagase T."/>
            <person name="Nomura N."/>
            <person name="Kikuchi H."/>
            <person name="Masuho Y."/>
            <person name="Yamashita R."/>
            <person name="Nakai K."/>
            <person name="Yada T."/>
            <person name="Nakamura Y."/>
            <person name="Ohara O."/>
            <person name="Isogai T."/>
            <person name="Sugano S."/>
        </authorList>
    </citation>
    <scope>NUCLEOTIDE SEQUENCE [LARGE SCALE MRNA] (ISOFORM 1)</scope>
</reference>
<reference key="3">
    <citation type="journal article" date="2004" name="Nature">
        <title>The DNA sequence and biology of human chromosome 19.</title>
        <authorList>
            <person name="Grimwood J."/>
            <person name="Gordon L.A."/>
            <person name="Olsen A.S."/>
            <person name="Terry A."/>
            <person name="Schmutz J."/>
            <person name="Lamerdin J.E."/>
            <person name="Hellsten U."/>
            <person name="Goodstein D."/>
            <person name="Couronne O."/>
            <person name="Tran-Gyamfi M."/>
            <person name="Aerts A."/>
            <person name="Altherr M."/>
            <person name="Ashworth L."/>
            <person name="Bajorek E."/>
            <person name="Black S."/>
            <person name="Branscomb E."/>
            <person name="Caenepeel S."/>
            <person name="Carrano A.V."/>
            <person name="Caoile C."/>
            <person name="Chan Y.M."/>
            <person name="Christensen M."/>
            <person name="Cleland C.A."/>
            <person name="Copeland A."/>
            <person name="Dalin E."/>
            <person name="Dehal P."/>
            <person name="Denys M."/>
            <person name="Detter J.C."/>
            <person name="Escobar J."/>
            <person name="Flowers D."/>
            <person name="Fotopulos D."/>
            <person name="Garcia C."/>
            <person name="Georgescu A.M."/>
            <person name="Glavina T."/>
            <person name="Gomez M."/>
            <person name="Gonzales E."/>
            <person name="Groza M."/>
            <person name="Hammon N."/>
            <person name="Hawkins T."/>
            <person name="Haydu L."/>
            <person name="Ho I."/>
            <person name="Huang W."/>
            <person name="Israni S."/>
            <person name="Jett J."/>
            <person name="Kadner K."/>
            <person name="Kimball H."/>
            <person name="Kobayashi A."/>
            <person name="Larionov V."/>
            <person name="Leem S.-H."/>
            <person name="Lopez F."/>
            <person name="Lou Y."/>
            <person name="Lowry S."/>
            <person name="Malfatti S."/>
            <person name="Martinez D."/>
            <person name="McCready P.M."/>
            <person name="Medina C."/>
            <person name="Morgan J."/>
            <person name="Nelson K."/>
            <person name="Nolan M."/>
            <person name="Ovcharenko I."/>
            <person name="Pitluck S."/>
            <person name="Pollard M."/>
            <person name="Popkie A.P."/>
            <person name="Predki P."/>
            <person name="Quan G."/>
            <person name="Ramirez L."/>
            <person name="Rash S."/>
            <person name="Retterer J."/>
            <person name="Rodriguez A."/>
            <person name="Rogers S."/>
            <person name="Salamov A."/>
            <person name="Salazar A."/>
            <person name="She X."/>
            <person name="Smith D."/>
            <person name="Slezak T."/>
            <person name="Solovyev V."/>
            <person name="Thayer N."/>
            <person name="Tice H."/>
            <person name="Tsai M."/>
            <person name="Ustaszewska A."/>
            <person name="Vo N."/>
            <person name="Wagner M."/>
            <person name="Wheeler J."/>
            <person name="Wu K."/>
            <person name="Xie G."/>
            <person name="Yang J."/>
            <person name="Dubchak I."/>
            <person name="Furey T.S."/>
            <person name="DeJong P."/>
            <person name="Dickson M."/>
            <person name="Gordon D."/>
            <person name="Eichler E.E."/>
            <person name="Pennacchio L.A."/>
            <person name="Richardson P."/>
            <person name="Stubbs L."/>
            <person name="Rokhsar D.S."/>
            <person name="Myers R.M."/>
            <person name="Rubin E.M."/>
            <person name="Lucas S.M."/>
        </authorList>
    </citation>
    <scope>NUCLEOTIDE SEQUENCE [LARGE SCALE GENOMIC DNA]</scope>
</reference>
<reference key="4">
    <citation type="journal article" date="2004" name="Genome Res.">
        <title>The status, quality, and expansion of the NIH full-length cDNA project: the Mammalian Gene Collection (MGC).</title>
        <authorList>
            <consortium name="The MGC Project Team"/>
        </authorList>
    </citation>
    <scope>NUCLEOTIDE SEQUENCE [LARGE SCALE MRNA] (ISOFORM 1)</scope>
    <source>
        <tissue>Lymph</tissue>
    </source>
</reference>
<reference key="5">
    <citation type="journal article" date="2008" name="Proc. Natl. Acad. Sci. U.S.A.">
        <title>A quantitative atlas of mitotic phosphorylation.</title>
        <authorList>
            <person name="Dephoure N."/>
            <person name="Zhou C."/>
            <person name="Villen J."/>
            <person name="Beausoleil S.A."/>
            <person name="Bakalarski C.E."/>
            <person name="Elledge S.J."/>
            <person name="Gygi S.P."/>
        </authorList>
    </citation>
    <scope>IDENTIFICATION BY MASS SPECTROMETRY [LARGE SCALE ANALYSIS]</scope>
    <source>
        <tissue>Cervix carcinoma</tissue>
    </source>
</reference>
<reference key="6">
    <citation type="journal article" date="2009" name="Sci. Signal.">
        <title>Quantitative phosphoproteomic analysis of T cell receptor signaling reveals system-wide modulation of protein-protein interactions.</title>
        <authorList>
            <person name="Mayya V."/>
            <person name="Lundgren D.H."/>
            <person name="Hwang S.-I."/>
            <person name="Rezaul K."/>
            <person name="Wu L."/>
            <person name="Eng J.K."/>
            <person name="Rodionov V."/>
            <person name="Han D.K."/>
        </authorList>
    </citation>
    <scope>PHOSPHORYLATION [LARGE SCALE ANALYSIS] AT SER-18; THR-55 AND SER-59</scope>
    <scope>IDENTIFICATION BY MASS SPECTROMETRY [LARGE SCALE ANALYSIS]</scope>
    <source>
        <tissue>Leukemic T-cell</tissue>
    </source>
</reference>
<reference key="7">
    <citation type="journal article" date="2012" name="Proc. Natl. Acad. Sci. U.S.A.">
        <title>N-terminal acetylome analyses and functional insights of the N-terminal acetyltransferase NatB.</title>
        <authorList>
            <person name="Van Damme P."/>
            <person name="Lasa M."/>
            <person name="Polevoda B."/>
            <person name="Gazquez C."/>
            <person name="Elosegui-Artola A."/>
            <person name="Kim D.S."/>
            <person name="De Juan-Pardo E."/>
            <person name="Demeyer K."/>
            <person name="Hole K."/>
            <person name="Larrea E."/>
            <person name="Timmerman E."/>
            <person name="Prieto J."/>
            <person name="Arnesen T."/>
            <person name="Sherman F."/>
            <person name="Gevaert K."/>
            <person name="Aldabe R."/>
        </authorList>
    </citation>
    <scope>ACETYLATION [LARGE SCALE ANALYSIS] AT MET-1</scope>
    <scope>IDENTIFICATION BY MASS SPECTROMETRY [LARGE SCALE ANALYSIS]</scope>
</reference>
<reference key="8">
    <citation type="journal article" date="2013" name="J. Proteome Res.">
        <title>Toward a comprehensive characterization of a human cancer cell phosphoproteome.</title>
        <authorList>
            <person name="Zhou H."/>
            <person name="Di Palma S."/>
            <person name="Preisinger C."/>
            <person name="Peng M."/>
            <person name="Polat A.N."/>
            <person name="Heck A.J."/>
            <person name="Mohammed S."/>
        </authorList>
    </citation>
    <scope>PHOSPHORYLATION [LARGE SCALE ANALYSIS] AT SER-18; THR-55 AND SER-59</scope>
    <scope>IDENTIFICATION BY MASS SPECTROMETRY [LARGE SCALE ANALYSIS]</scope>
    <source>
        <tissue>Cervix carcinoma</tissue>
        <tissue>Erythroleukemia</tissue>
    </source>
</reference>
<reference key="9">
    <citation type="journal article" date="2014" name="J. Proteomics">
        <title>An enzyme assisted RP-RPLC approach for in-depth analysis of human liver phosphoproteome.</title>
        <authorList>
            <person name="Bian Y."/>
            <person name="Song C."/>
            <person name="Cheng K."/>
            <person name="Dong M."/>
            <person name="Wang F."/>
            <person name="Huang J."/>
            <person name="Sun D."/>
            <person name="Wang L."/>
            <person name="Ye M."/>
            <person name="Zou H."/>
        </authorList>
    </citation>
    <scope>PHOSPHORYLATION [LARGE SCALE ANALYSIS] AT SER-18</scope>
    <scope>IDENTIFICATION BY MASS SPECTROMETRY [LARGE SCALE ANALYSIS]</scope>
    <source>
        <tissue>Liver</tissue>
    </source>
</reference>
<proteinExistence type="evidence at protein level"/>
<evidence type="ECO:0000250" key="1"/>
<evidence type="ECO:0000255" key="2"/>
<evidence type="ECO:0000255" key="3">
    <source>
        <dbReference type="PROSITE-ProRule" id="PRU00080"/>
    </source>
</evidence>
<evidence type="ECO:0000256" key="4">
    <source>
        <dbReference type="SAM" id="MobiDB-lite"/>
    </source>
</evidence>
<evidence type="ECO:0000305" key="5"/>
<evidence type="ECO:0007744" key="6">
    <source>
    </source>
</evidence>
<evidence type="ECO:0007744" key="7">
    <source>
    </source>
</evidence>
<evidence type="ECO:0007744" key="8">
    <source>
    </source>
</evidence>
<evidence type="ECO:0007744" key="9">
    <source>
    </source>
</evidence>
<dbReference type="EMBL" id="AY736034">
    <property type="protein sequence ID" value="AAU50678.1"/>
    <property type="molecule type" value="mRNA"/>
</dbReference>
<dbReference type="EMBL" id="AK123037">
    <property type="protein sequence ID" value="BAG53859.1"/>
    <property type="molecule type" value="mRNA"/>
</dbReference>
<dbReference type="EMBL" id="AC018761">
    <property type="status" value="NOT_ANNOTATED_CDS"/>
    <property type="molecule type" value="Genomic_DNA"/>
</dbReference>
<dbReference type="EMBL" id="BC004290">
    <property type="status" value="NOT_ANNOTATED_CDS"/>
    <property type="molecule type" value="mRNA"/>
</dbReference>
<dbReference type="CCDS" id="CCDS12278.2">
    <molecule id="Q5XUX1-3"/>
</dbReference>
<dbReference type="RefSeq" id="NP_115677.2">
    <molecule id="Q5XUX1-3"/>
    <property type="nucleotide sequence ID" value="NM_032301.3"/>
</dbReference>
<dbReference type="SMR" id="Q5XUX1"/>
<dbReference type="BioGRID" id="123988">
    <property type="interactions" value="31"/>
</dbReference>
<dbReference type="ComplexPortal" id="CPX-7785">
    <property type="entry name" value="SCF E3 ubiquitin ligase complex, FBXW9 variant"/>
</dbReference>
<dbReference type="FunCoup" id="Q5XUX1">
    <property type="interactions" value="854"/>
</dbReference>
<dbReference type="IntAct" id="Q5XUX1">
    <property type="interactions" value="17"/>
</dbReference>
<dbReference type="STRING" id="9606.ENSP00000376945"/>
<dbReference type="iPTMnet" id="Q5XUX1"/>
<dbReference type="PhosphoSitePlus" id="Q5XUX1"/>
<dbReference type="BioMuta" id="FBXW9"/>
<dbReference type="DMDM" id="115311596"/>
<dbReference type="jPOST" id="Q5XUX1"/>
<dbReference type="MassIVE" id="Q5XUX1"/>
<dbReference type="PaxDb" id="9606-ENSP00000376945"/>
<dbReference type="PeptideAtlas" id="Q5XUX1"/>
<dbReference type="ProteomicsDB" id="65848">
    <molecule id="Q5XUX1-2"/>
</dbReference>
<dbReference type="ProteomicsDB" id="65849">
    <molecule id="Q5XUX1-3"/>
</dbReference>
<dbReference type="Pumba" id="Q5XUX1"/>
<dbReference type="Antibodypedia" id="26106">
    <property type="antibodies" value="102 antibodies from 15 providers"/>
</dbReference>
<dbReference type="DNASU" id="84261"/>
<dbReference type="Ensembl" id="ENST00000393261.8">
    <molecule id="Q5XUX1-3"/>
    <property type="protein sequence ID" value="ENSP00000376945.3"/>
    <property type="gene ID" value="ENSG00000132004.13"/>
</dbReference>
<dbReference type="Ensembl" id="ENST00000587955.1">
    <molecule id="Q5XUX1-2"/>
    <property type="protein sequence ID" value="ENSP00000465387.1"/>
    <property type="gene ID" value="ENSG00000132004.13"/>
</dbReference>
<dbReference type="GeneID" id="84261"/>
<dbReference type="KEGG" id="hsa:84261"/>
<dbReference type="MANE-Select" id="ENST00000393261.8">
    <property type="protein sequence ID" value="ENSP00000376945.3"/>
    <property type="RefSeq nucleotide sequence ID" value="NM_032301.3"/>
    <property type="RefSeq protein sequence ID" value="NP_115677.2"/>
</dbReference>
<dbReference type="UCSC" id="uc002mum.2">
    <molecule id="Q5XUX1-3"/>
    <property type="organism name" value="human"/>
</dbReference>
<dbReference type="AGR" id="HGNC:28136"/>
<dbReference type="CTD" id="84261"/>
<dbReference type="GeneCards" id="FBXW9"/>
<dbReference type="HGNC" id="HGNC:28136">
    <property type="gene designation" value="FBXW9"/>
</dbReference>
<dbReference type="HPA" id="ENSG00000132004">
    <property type="expression patterns" value="Low tissue specificity"/>
</dbReference>
<dbReference type="MIM" id="609074">
    <property type="type" value="gene"/>
</dbReference>
<dbReference type="neXtProt" id="NX_Q5XUX1"/>
<dbReference type="OpenTargets" id="ENSG00000132004"/>
<dbReference type="PharmGKB" id="PA134910095"/>
<dbReference type="VEuPathDB" id="HostDB:ENSG00000132004"/>
<dbReference type="eggNOG" id="KOG0274">
    <property type="taxonomic scope" value="Eukaryota"/>
</dbReference>
<dbReference type="GeneTree" id="ENSGT00390000006806"/>
<dbReference type="HOGENOM" id="CLU_034344_0_0_1"/>
<dbReference type="InParanoid" id="Q5XUX1"/>
<dbReference type="OMA" id="WAGDNGG"/>
<dbReference type="OrthoDB" id="71437at2759"/>
<dbReference type="PAN-GO" id="Q5XUX1">
    <property type="GO annotations" value="0 GO annotations based on evolutionary models"/>
</dbReference>
<dbReference type="PhylomeDB" id="Q5XUX1"/>
<dbReference type="TreeFam" id="TF313746"/>
<dbReference type="PathwayCommons" id="Q5XUX1"/>
<dbReference type="Reactome" id="R-HSA-390471">
    <property type="pathway name" value="Association of TriC/CCT with target proteins during biosynthesis"/>
</dbReference>
<dbReference type="Reactome" id="R-HSA-8951664">
    <property type="pathway name" value="Neddylation"/>
</dbReference>
<dbReference type="Reactome" id="R-HSA-983168">
    <property type="pathway name" value="Antigen processing: Ubiquitination &amp; Proteasome degradation"/>
</dbReference>
<dbReference type="SignaLink" id="Q5XUX1"/>
<dbReference type="BioGRID-ORCS" id="84261">
    <property type="hits" value="18 hits in 1189 CRISPR screens"/>
</dbReference>
<dbReference type="ChiTaRS" id="FBXW9">
    <property type="organism name" value="human"/>
</dbReference>
<dbReference type="GenomeRNAi" id="84261"/>
<dbReference type="Pharos" id="Q5XUX1">
    <property type="development level" value="Tdark"/>
</dbReference>
<dbReference type="PRO" id="PR:Q5XUX1"/>
<dbReference type="Proteomes" id="UP000005640">
    <property type="component" value="Chromosome 19"/>
</dbReference>
<dbReference type="RNAct" id="Q5XUX1">
    <property type="molecule type" value="protein"/>
</dbReference>
<dbReference type="Bgee" id="ENSG00000132004">
    <property type="expression patterns" value="Expressed in right uterine tube and 133 other cell types or tissues"/>
</dbReference>
<dbReference type="ExpressionAtlas" id="Q5XUX1">
    <property type="expression patterns" value="baseline and differential"/>
</dbReference>
<dbReference type="GO" id="GO:0005829">
    <property type="term" value="C:cytosol"/>
    <property type="evidence" value="ECO:0000304"/>
    <property type="project" value="Reactome"/>
</dbReference>
<dbReference type="FunFam" id="2.130.10.10:FF:000959">
    <property type="entry name" value="F-box and WD repeat domain containing 9"/>
    <property type="match status" value="1"/>
</dbReference>
<dbReference type="FunFam" id="2.130.10.10:FF:000842">
    <property type="entry name" value="F-box and WD repeat domain-containing 9"/>
    <property type="match status" value="1"/>
</dbReference>
<dbReference type="FunFam" id="1.20.1280.50:FF:000062">
    <property type="entry name" value="F-box/WD repeat-containing protein 9 isoform X2"/>
    <property type="match status" value="1"/>
</dbReference>
<dbReference type="Gene3D" id="1.20.1280.50">
    <property type="match status" value="1"/>
</dbReference>
<dbReference type="Gene3D" id="2.130.10.10">
    <property type="entry name" value="YVTN repeat-like/Quinoprotein amine dehydrogenase"/>
    <property type="match status" value="2"/>
</dbReference>
<dbReference type="InterPro" id="IPR036047">
    <property type="entry name" value="F-box-like_dom_sf"/>
</dbReference>
<dbReference type="InterPro" id="IPR001810">
    <property type="entry name" value="F-box_dom"/>
</dbReference>
<dbReference type="InterPro" id="IPR020472">
    <property type="entry name" value="G-protein_beta_WD-40_rep"/>
</dbReference>
<dbReference type="InterPro" id="IPR015943">
    <property type="entry name" value="WD40/YVTN_repeat-like_dom_sf"/>
</dbReference>
<dbReference type="InterPro" id="IPR019775">
    <property type="entry name" value="WD40_repeat_CS"/>
</dbReference>
<dbReference type="InterPro" id="IPR036322">
    <property type="entry name" value="WD40_repeat_dom_sf"/>
</dbReference>
<dbReference type="InterPro" id="IPR001680">
    <property type="entry name" value="WD40_rpt"/>
</dbReference>
<dbReference type="PANTHER" id="PTHR19855:SF34">
    <property type="entry name" value="F-BOX_WD REPEAT-CONTAINING PROTEIN 9"/>
    <property type="match status" value="1"/>
</dbReference>
<dbReference type="PANTHER" id="PTHR19855">
    <property type="entry name" value="WD40 REPEAT PROTEIN 12, 37"/>
    <property type="match status" value="1"/>
</dbReference>
<dbReference type="Pfam" id="PF12937">
    <property type="entry name" value="F-box-like"/>
    <property type="match status" value="1"/>
</dbReference>
<dbReference type="Pfam" id="PF00400">
    <property type="entry name" value="WD40"/>
    <property type="match status" value="2"/>
</dbReference>
<dbReference type="PRINTS" id="PR00320">
    <property type="entry name" value="GPROTEINBRPT"/>
</dbReference>
<dbReference type="SMART" id="SM00256">
    <property type="entry name" value="FBOX"/>
    <property type="match status" value="1"/>
</dbReference>
<dbReference type="SMART" id="SM00320">
    <property type="entry name" value="WD40"/>
    <property type="match status" value="6"/>
</dbReference>
<dbReference type="SUPFAM" id="SSF81383">
    <property type="entry name" value="F-box domain"/>
    <property type="match status" value="1"/>
</dbReference>
<dbReference type="SUPFAM" id="SSF50978">
    <property type="entry name" value="WD40 repeat-like"/>
    <property type="match status" value="1"/>
</dbReference>
<dbReference type="PROSITE" id="PS50181">
    <property type="entry name" value="FBOX"/>
    <property type="match status" value="1"/>
</dbReference>
<dbReference type="PROSITE" id="PS00678">
    <property type="entry name" value="WD_REPEATS_1"/>
    <property type="match status" value="2"/>
</dbReference>
<dbReference type="PROSITE" id="PS50082">
    <property type="entry name" value="WD_REPEATS_2"/>
    <property type="match status" value="3"/>
</dbReference>
<dbReference type="PROSITE" id="PS50294">
    <property type="entry name" value="WD_REPEATS_REGION"/>
    <property type="match status" value="1"/>
</dbReference>
<comment type="function">
    <text evidence="1">Substrate-recognition component of the SCF (SKP1-CUL1-F-box protein)-type E3 ubiquitin ligase complex.</text>
</comment>
<comment type="subunit">
    <text evidence="1">Interacts with SKP1 and CUL1.</text>
</comment>
<comment type="interaction">
    <interactant intactId="EBI-2322729">
        <id>Q5XUX1</id>
    </interactant>
    <interactant intactId="EBI-307486">
        <id>P63208</id>
        <label>SKP1</label>
    </interactant>
    <organismsDiffer>false</organismsDiffer>
    <experiments>7</experiments>
</comment>
<comment type="alternative products">
    <event type="alternative splicing"/>
    <isoform>
        <id>Q5XUX1-3</id>
        <name>1</name>
        <sequence type="displayed"/>
    </isoform>
    <isoform>
        <id>Q5XUX1-2</id>
        <name>2</name>
        <sequence type="described" ref="VSP_060706 VSP_060707"/>
    </isoform>
</comment>
<protein>
    <recommendedName>
        <fullName>F-box/WD repeat-containing protein 9</fullName>
    </recommendedName>
    <alternativeName>
        <fullName>F-box and WD-40 domain-containing protein 9</fullName>
    </alternativeName>
</protein>
<sequence>MELPLGRCDDSRTWDDDSDPESETDPDAQAKAYVARVLSPPKSGLAFSRPSQLSTPAASPSASEPRAASRVSAVSEPGLLSLPPELLLEICSYLDARLVLHVLSRVCHALRDLVSDHVTWRLRALRRVRAPYPVVEEKNFDWPAACIALEQHLSRWAEDGRWVEYFCLAEGHVASVDSVLLLQGGSLCLSGSRDRNVNLWDLRQLGTESNQVLIKTLGTKRNSTHEGWVWSLAAQDHRVCSGSWDSTVKLWDMAADGQQFGEIKASSAVLCLSYLPDILVTGTYDKKVTIYDPRAGPALLKHQQLHSRPVLTLLADDRHIISGSEDHTLVVVDRRANSVLQRLQLDSYLLCMSYQEPQLWAGDNQGLLHVFANRNGCFQLIRSFDVGHSFPITGIQYSVGALYTTSTDKTIRVHVPTDPPRTICTRRHDNGLNRVCAEGNLVVAGSGDLSLEVWRLQA</sequence>
<accession>Q5XUX1</accession>
<accession>B3KVP7</accession>
<accession>Q9BT89</accession>
<organism>
    <name type="scientific">Homo sapiens</name>
    <name type="common">Human</name>
    <dbReference type="NCBI Taxonomy" id="9606"/>
    <lineage>
        <taxon>Eukaryota</taxon>
        <taxon>Metazoa</taxon>
        <taxon>Chordata</taxon>
        <taxon>Craniata</taxon>
        <taxon>Vertebrata</taxon>
        <taxon>Euteleostomi</taxon>
        <taxon>Mammalia</taxon>
        <taxon>Eutheria</taxon>
        <taxon>Euarchontoglires</taxon>
        <taxon>Primates</taxon>
        <taxon>Haplorrhini</taxon>
        <taxon>Catarrhini</taxon>
        <taxon>Hominidae</taxon>
        <taxon>Homo</taxon>
    </lineage>
</organism>